<gene>
    <name evidence="7" type="primary">rpo2C</name>
    <name evidence="5" type="synonym">rpoB1</name>
    <name type="ordered locus">OE_4741R</name>
</gene>
<accession>B0R8D5</accession>
<accession>P15351</accession>
<accession>Q9HM78</accession>
<sequence length="608" mass="67276">MSTEREAKVYVNGSLVGTHENPEELAEQIREARRRGEVSEMVNVSVRDRTGEVIVNADAGRARRPLLVVENGEPVVTQEEVEAVKNGDIDFEDLVEAGKVEFIDAEEEEDILVGVEEEELTTDHTHLEIDPQLIFGIGAGMIPYPEHNASPRITMGAGMMKQSLGLPAANYRIRPDTRQHLLHYPQKAMVNTQTTEQIGYDDRPAGQNFVVAVMSYEGFNIEDALVMNKGSVERALSRSHFFRTYEGEERRYPGGQEDRFEIPGDDVRGARGEDAYTHLDDDGLVNPETKVDDSSVLLGKTSPPRFLEEPEDMGGLSPQKRRETSVTMRSGEDGVVDTVTLMEGEDGSKLAKVSVRDERIPELGDKFASRHGQKGVVGHLAPQEDMPFTQEGVVPDLVLNPHALPSRMTVGHVLEMLGGKAGSLDGRSVDGTPFTGEGEDEIRGTLEDRGFKSSGKEVMYSGVSGEKIEAEIFVGTIFYHKLYHMVSNKLHARSKGPVQVLTRQPTEGRAREGGLRVGEMERDTVIGHGAAMVLKERLLDSSDREEIHVCGNCGMTAVENYEQRRVYCPNCEEETDVHSIEMSYAFKLLLDEMKALGIAPRLELEEAV</sequence>
<organism>
    <name type="scientific">Halobacterium salinarum (strain ATCC 29341 / DSM 671 / R1)</name>
    <dbReference type="NCBI Taxonomy" id="478009"/>
    <lineage>
        <taxon>Archaea</taxon>
        <taxon>Methanobacteriati</taxon>
        <taxon>Methanobacteriota</taxon>
        <taxon>Stenosarchaea group</taxon>
        <taxon>Halobacteria</taxon>
        <taxon>Halobacteriales</taxon>
        <taxon>Halobacteriaceae</taxon>
        <taxon>Halobacterium</taxon>
        <taxon>Halobacterium salinarum NRC-34001</taxon>
    </lineage>
</organism>
<name>RPO2C_HALS3</name>
<proteinExistence type="evidence at protein level"/>
<reference key="1">
    <citation type="journal article" date="1989" name="J. Mol. Biol.">
        <title>Sequence, organization, transcription and evolution of RNA polymerase subunit genes from the archaebacterial extreme halophiles Halobacterium halobium and Halococcus morrhuae.</title>
        <authorList>
            <person name="Leffers H."/>
            <person name="Gropp F."/>
            <person name="Lottspeich F."/>
            <person name="Zillig W."/>
            <person name="Garrett R.A."/>
        </authorList>
    </citation>
    <scope>NUCLEOTIDE SEQUENCE [GENOMIC DNA]</scope>
    <scope>PROTEIN SEQUENCE OF 2-13</scope>
    <scope>SUBUNIT</scope>
    <source>
        <strain>ATCC 29341 / DSM 671 / R1</strain>
    </source>
</reference>
<reference key="2">
    <citation type="journal article" date="2008" name="Genomics">
        <title>Evolution in the laboratory: the genome of Halobacterium salinarum strain R1 compared to that of strain NRC-1.</title>
        <authorList>
            <person name="Pfeiffer F."/>
            <person name="Schuster S.C."/>
            <person name="Broicher A."/>
            <person name="Falb M."/>
            <person name="Palm P."/>
            <person name="Rodewald K."/>
            <person name="Ruepp A."/>
            <person name="Soppa J."/>
            <person name="Tittor J."/>
            <person name="Oesterhelt D."/>
        </authorList>
    </citation>
    <scope>NUCLEOTIDE SEQUENCE [LARGE SCALE GENOMIC DNA]</scope>
    <source>
        <strain>ATCC 29341 / DSM 671 / R1</strain>
    </source>
</reference>
<protein>
    <recommendedName>
        <fullName evidence="7">DNA-directed RNA polymerase subunit Rpo2C</fullName>
        <ecNumber evidence="2">2.7.7.6</ecNumber>
    </recommendedName>
    <alternativeName>
        <fullName evidence="6">DNA-directed RNA polymerase subunit B'</fullName>
    </alternativeName>
</protein>
<comment type="function">
    <text evidence="1">DNA-dependent RNA polymerase (RNAP) catalyzes the transcription of DNA into RNA using the four ribonucleoside triphosphates as substrates. The Rpo2 subunit (Rpo2N and Rpo2C in this organism) is implicated in DNA promoter recognition and in nucleotide binding.</text>
</comment>
<comment type="catalytic activity">
    <reaction evidence="2">
        <text>RNA(n) + a ribonucleoside 5'-triphosphate = RNA(n+1) + diphosphate</text>
        <dbReference type="Rhea" id="RHEA:21248"/>
        <dbReference type="Rhea" id="RHEA-COMP:14527"/>
        <dbReference type="Rhea" id="RHEA-COMP:17342"/>
        <dbReference type="ChEBI" id="CHEBI:33019"/>
        <dbReference type="ChEBI" id="CHEBI:61557"/>
        <dbReference type="ChEBI" id="CHEBI:140395"/>
        <dbReference type="EC" id="2.7.7.6"/>
    </reaction>
</comment>
<comment type="cofactor">
    <cofactor evidence="1">
        <name>Zn(2+)</name>
        <dbReference type="ChEBI" id="CHEBI:29105"/>
    </cofactor>
    <text evidence="1">Binds 1 Zn(2+) per subunit.</text>
</comment>
<comment type="subunit">
    <text evidence="4">Part of the RNA polymerase complex.</text>
</comment>
<comment type="subcellular location">
    <subcellularLocation>
        <location evidence="1">Cytoplasm</location>
    </subcellularLocation>
</comment>
<comment type="similarity">
    <text evidence="7">Belongs to the RNA polymerase beta chain family.</text>
</comment>
<feature type="initiator methionine" description="Removed" evidence="4">
    <location>
        <position position="1"/>
    </location>
</feature>
<feature type="chain" id="PRO_0000409672" description="DNA-directed RNA polymerase subunit Rpo2C">
    <location>
        <begin position="2"/>
        <end position="608"/>
    </location>
</feature>
<feature type="region of interest" description="Disordered" evidence="3">
    <location>
        <begin position="278"/>
        <end position="326"/>
    </location>
</feature>
<feature type="binding site" evidence="1">
    <location>
        <position position="550"/>
    </location>
    <ligand>
        <name>Zn(2+)</name>
        <dbReference type="ChEBI" id="CHEBI:29105"/>
    </ligand>
</feature>
<feature type="binding site" evidence="1">
    <location>
        <position position="553"/>
    </location>
    <ligand>
        <name>Zn(2+)</name>
        <dbReference type="ChEBI" id="CHEBI:29105"/>
    </ligand>
</feature>
<feature type="binding site" evidence="1">
    <location>
        <position position="568"/>
    </location>
    <ligand>
        <name>Zn(2+)</name>
        <dbReference type="ChEBI" id="CHEBI:29105"/>
    </ligand>
</feature>
<feature type="binding site" evidence="7">
    <location>
        <position position="571"/>
    </location>
    <ligand>
        <name>Zn(2+)</name>
        <dbReference type="ChEBI" id="CHEBI:29105"/>
    </ligand>
</feature>
<keyword id="KW-0963">Cytoplasm</keyword>
<keyword id="KW-0903">Direct protein sequencing</keyword>
<keyword id="KW-0238">DNA-binding</keyword>
<keyword id="KW-0240">DNA-directed RNA polymerase</keyword>
<keyword id="KW-0479">Metal-binding</keyword>
<keyword id="KW-0548">Nucleotidyltransferase</keyword>
<keyword id="KW-0804">Transcription</keyword>
<keyword id="KW-0808">Transferase</keyword>
<keyword id="KW-0862">Zinc</keyword>
<dbReference type="EC" id="2.7.7.6" evidence="2"/>
<dbReference type="EMBL" id="X57144">
    <property type="protein sequence ID" value="CAA40425.1"/>
    <property type="molecule type" value="Genomic_DNA"/>
</dbReference>
<dbReference type="EMBL" id="AM774415">
    <property type="protein sequence ID" value="CAP15004.1"/>
    <property type="molecule type" value="Genomic_DNA"/>
</dbReference>
<dbReference type="PIR" id="S03573">
    <property type="entry name" value="S03573"/>
</dbReference>
<dbReference type="SMR" id="B0R8D5"/>
<dbReference type="EnsemblBacteria" id="CAP15004">
    <property type="protein sequence ID" value="CAP15004"/>
    <property type="gene ID" value="OE_4741R"/>
</dbReference>
<dbReference type="KEGG" id="hsl:OE_4741R"/>
<dbReference type="HOGENOM" id="CLU_000524_2_2_2"/>
<dbReference type="PhylomeDB" id="B0R8D5"/>
<dbReference type="Proteomes" id="UP000001321">
    <property type="component" value="Chromosome"/>
</dbReference>
<dbReference type="GO" id="GO:0005737">
    <property type="term" value="C:cytoplasm"/>
    <property type="evidence" value="ECO:0007669"/>
    <property type="project" value="UniProtKB-SubCell"/>
</dbReference>
<dbReference type="GO" id="GO:0000428">
    <property type="term" value="C:DNA-directed RNA polymerase complex"/>
    <property type="evidence" value="ECO:0007669"/>
    <property type="project" value="UniProtKB-KW"/>
</dbReference>
<dbReference type="GO" id="GO:0003677">
    <property type="term" value="F:DNA binding"/>
    <property type="evidence" value="ECO:0007669"/>
    <property type="project" value="UniProtKB-KW"/>
</dbReference>
<dbReference type="GO" id="GO:0003899">
    <property type="term" value="F:DNA-directed RNA polymerase activity"/>
    <property type="evidence" value="ECO:0007669"/>
    <property type="project" value="UniProtKB-EC"/>
</dbReference>
<dbReference type="GO" id="GO:0032549">
    <property type="term" value="F:ribonucleoside binding"/>
    <property type="evidence" value="ECO:0007669"/>
    <property type="project" value="InterPro"/>
</dbReference>
<dbReference type="GO" id="GO:0008270">
    <property type="term" value="F:zinc ion binding"/>
    <property type="evidence" value="ECO:0007669"/>
    <property type="project" value="InterPro"/>
</dbReference>
<dbReference type="GO" id="GO:0006351">
    <property type="term" value="P:DNA-templated transcription"/>
    <property type="evidence" value="ECO:0007669"/>
    <property type="project" value="InterPro"/>
</dbReference>
<dbReference type="CDD" id="cd00653">
    <property type="entry name" value="RNA_pol_B_RPB2"/>
    <property type="match status" value="1"/>
</dbReference>
<dbReference type="FunFam" id="2.40.270.10:FF:000011">
    <property type="entry name" value="DNA-directed RNA polymerase subunit beta"/>
    <property type="match status" value="1"/>
</dbReference>
<dbReference type="FunFam" id="3.90.1800.10:FF:000002">
    <property type="entry name" value="DNA-directed RNA polymerase subunit beta"/>
    <property type="match status" value="1"/>
</dbReference>
<dbReference type="Gene3D" id="2.40.50.150">
    <property type="match status" value="1"/>
</dbReference>
<dbReference type="Gene3D" id="3.90.1070.20">
    <property type="match status" value="1"/>
</dbReference>
<dbReference type="Gene3D" id="2.40.270.10">
    <property type="entry name" value="DNA-directed RNA polymerase, subunit 2, domain 6"/>
    <property type="match status" value="1"/>
</dbReference>
<dbReference type="Gene3D" id="3.90.1800.10">
    <property type="entry name" value="RNA polymerase alpha subunit dimerisation domain"/>
    <property type="match status" value="1"/>
</dbReference>
<dbReference type="InterPro" id="IPR015712">
    <property type="entry name" value="DNA-dir_RNA_pol_su2"/>
</dbReference>
<dbReference type="InterPro" id="IPR007120">
    <property type="entry name" value="DNA-dir_RNAP_su2_dom"/>
</dbReference>
<dbReference type="InterPro" id="IPR037033">
    <property type="entry name" value="DNA-dir_RNAP_su2_hyb_sf"/>
</dbReference>
<dbReference type="InterPro" id="IPR007121">
    <property type="entry name" value="RNA_pol_bsu_CS"/>
</dbReference>
<dbReference type="InterPro" id="IPR007646">
    <property type="entry name" value="RNA_pol_Rpb2_4"/>
</dbReference>
<dbReference type="InterPro" id="IPR007641">
    <property type="entry name" value="RNA_pol_Rpb2_7"/>
</dbReference>
<dbReference type="InterPro" id="IPR014724">
    <property type="entry name" value="RNA_pol_RPB2_OB-fold"/>
</dbReference>
<dbReference type="InterPro" id="IPR019969">
    <property type="entry name" value="RNAP_Rpo2"/>
</dbReference>
<dbReference type="NCBIfam" id="TIGR03670">
    <property type="entry name" value="rpoB_arch"/>
    <property type="match status" value="1"/>
</dbReference>
<dbReference type="PANTHER" id="PTHR20856">
    <property type="entry name" value="DNA-DIRECTED RNA POLYMERASE I SUBUNIT 2"/>
    <property type="match status" value="1"/>
</dbReference>
<dbReference type="Pfam" id="PF04566">
    <property type="entry name" value="RNA_pol_Rpb2_4"/>
    <property type="match status" value="1"/>
</dbReference>
<dbReference type="Pfam" id="PF00562">
    <property type="entry name" value="RNA_pol_Rpb2_6"/>
    <property type="match status" value="1"/>
</dbReference>
<dbReference type="Pfam" id="PF04560">
    <property type="entry name" value="RNA_pol_Rpb2_7"/>
    <property type="match status" value="1"/>
</dbReference>
<dbReference type="SUPFAM" id="SSF64484">
    <property type="entry name" value="beta and beta-prime subunits of DNA dependent RNA-polymerase"/>
    <property type="match status" value="1"/>
</dbReference>
<dbReference type="PROSITE" id="PS01166">
    <property type="entry name" value="RNA_POL_BETA"/>
    <property type="match status" value="1"/>
</dbReference>
<evidence type="ECO:0000250" key="1">
    <source>
        <dbReference type="UniProtKB" id="B8YB55"/>
    </source>
</evidence>
<evidence type="ECO:0000250" key="2">
    <source>
        <dbReference type="UniProtKB" id="P11513"/>
    </source>
</evidence>
<evidence type="ECO:0000256" key="3">
    <source>
        <dbReference type="SAM" id="MobiDB-lite"/>
    </source>
</evidence>
<evidence type="ECO:0000269" key="4">
    <source>
    </source>
</evidence>
<evidence type="ECO:0000303" key="5">
    <source>
    </source>
</evidence>
<evidence type="ECO:0000303" key="6">
    <source>
    </source>
</evidence>
<evidence type="ECO:0000305" key="7"/>